<sequence>MASKAILEELNILSSKIFGTQYKSNNSRTGRKFVVQELKGAKLKSYYPATINYRQLRTLLNDKTFPDSDEELRMEIRKGRIRQGKGASKSKKK</sequence>
<protein>
    <recommendedName>
        <fullName evidence="3">Small ribosomal subunit protein mS33</fullName>
    </recommendedName>
    <alternativeName>
        <fullName>37S ribosomal protein S27, mitochondrial</fullName>
    </alternativeName>
</protein>
<keyword id="KW-0496">Mitochondrion</keyword>
<keyword id="KW-1185">Reference proteome</keyword>
<keyword id="KW-0687">Ribonucleoprotein</keyword>
<keyword id="KW-0689">Ribosomal protein</keyword>
<gene>
    <name type="primary">rsm27</name>
    <name type="ORF">SPBC30D10.12c</name>
</gene>
<comment type="function">
    <text evidence="1">Component of the mitochondrial ribosome (mitoribosome), a dedicated translation machinery responsible for the synthesis of mitochondrial genome-encoded proteins, including at least some of the essential transmembrane subunits of the mitochondrial respiratory chain. The mitoribosomes are attached to the mitochondrial inner membrane and translation products are cotranslationally integrated into the membrane.</text>
</comment>
<comment type="subunit">
    <text evidence="1">Component of the mitochondrial small ribosomal subunit (mt-SSU). Mature yeast 74S mitochondrial ribosomes consist of a small (37S) and a large (54S) subunit. The 37S small subunit contains a 15S ribosomal RNA (15S mt-rRNA) and at least 32 different proteins. The 54S large subunit contains a 21S rRNA (21S mt-rRNA) and at least 45 different proteins.</text>
</comment>
<comment type="subcellular location">
    <subcellularLocation>
        <location evidence="2">Mitochondrion</location>
    </subcellularLocation>
</comment>
<comment type="similarity">
    <text evidence="3">Belongs to the mitochondrion-specific ribosomal protein mS33 family.</text>
</comment>
<evidence type="ECO:0000250" key="1">
    <source>
        <dbReference type="UniProtKB" id="P53305"/>
    </source>
</evidence>
<evidence type="ECO:0000269" key="2">
    <source>
    </source>
</evidence>
<evidence type="ECO:0000305" key="3"/>
<feature type="chain" id="PRO_0000116500" description="Small ribosomal subunit protein mS33">
    <location>
        <begin position="1"/>
        <end position="93"/>
    </location>
</feature>
<dbReference type="EMBL" id="CU329671">
    <property type="protein sequence ID" value="CAB10807.1"/>
    <property type="molecule type" value="Genomic_DNA"/>
</dbReference>
<dbReference type="PIR" id="T40184">
    <property type="entry name" value="T40184"/>
</dbReference>
<dbReference type="RefSeq" id="NP_596273.1">
    <property type="nucleotide sequence ID" value="NM_001022194.2"/>
</dbReference>
<dbReference type="SMR" id="O14358"/>
<dbReference type="BioGRID" id="277005">
    <property type="interactions" value="1"/>
</dbReference>
<dbReference type="ComplexPortal" id="CPX-10315">
    <property type="entry name" value="37S mitochondrial small ribosomal subunit"/>
</dbReference>
<dbReference type="FunCoup" id="O14358">
    <property type="interactions" value="221"/>
</dbReference>
<dbReference type="STRING" id="284812.O14358"/>
<dbReference type="PaxDb" id="4896-SPBC30D10.12c.1"/>
<dbReference type="EnsemblFungi" id="SPBC30D10.12c.1">
    <property type="protein sequence ID" value="SPBC30D10.12c.1:pep"/>
    <property type="gene ID" value="SPBC30D10.12c"/>
</dbReference>
<dbReference type="GeneID" id="2540477"/>
<dbReference type="KEGG" id="spo:2540477"/>
<dbReference type="PomBase" id="SPBC30D10.12c">
    <property type="gene designation" value="rsm27"/>
</dbReference>
<dbReference type="VEuPathDB" id="FungiDB:SPBC30D10.12c"/>
<dbReference type="eggNOG" id="KOG4844">
    <property type="taxonomic scope" value="Eukaryota"/>
</dbReference>
<dbReference type="HOGENOM" id="CLU_150777_0_1_1"/>
<dbReference type="InParanoid" id="O14358"/>
<dbReference type="OMA" id="MKAQCQV"/>
<dbReference type="PhylomeDB" id="O14358"/>
<dbReference type="PRO" id="PR:O14358"/>
<dbReference type="Proteomes" id="UP000002485">
    <property type="component" value="Chromosome II"/>
</dbReference>
<dbReference type="GO" id="GO:0005763">
    <property type="term" value="C:mitochondrial small ribosomal subunit"/>
    <property type="evidence" value="ECO:0000250"/>
    <property type="project" value="PomBase"/>
</dbReference>
<dbReference type="GO" id="GO:0005739">
    <property type="term" value="C:mitochondrion"/>
    <property type="evidence" value="ECO:0007005"/>
    <property type="project" value="PomBase"/>
</dbReference>
<dbReference type="GO" id="GO:0003735">
    <property type="term" value="F:structural constituent of ribosome"/>
    <property type="evidence" value="ECO:0000250"/>
    <property type="project" value="PomBase"/>
</dbReference>
<dbReference type="GO" id="GO:0032543">
    <property type="term" value="P:mitochondrial translation"/>
    <property type="evidence" value="ECO:0000250"/>
    <property type="project" value="PomBase"/>
</dbReference>
<dbReference type="InterPro" id="IPR013219">
    <property type="entry name" value="Ribosomal_mS33"/>
</dbReference>
<dbReference type="PANTHER" id="PTHR13362">
    <property type="entry name" value="MITOCHONDRIAL RIBOSOMAL PROTEIN S33"/>
    <property type="match status" value="1"/>
</dbReference>
<dbReference type="PANTHER" id="PTHR13362:SF2">
    <property type="entry name" value="SMALL RIBOSOMAL SUBUNIT PROTEIN MS33"/>
    <property type="match status" value="1"/>
</dbReference>
<dbReference type="Pfam" id="PF08293">
    <property type="entry name" value="MRP-S33"/>
    <property type="match status" value="1"/>
</dbReference>
<organism>
    <name type="scientific">Schizosaccharomyces pombe (strain 972 / ATCC 24843)</name>
    <name type="common">Fission yeast</name>
    <dbReference type="NCBI Taxonomy" id="284812"/>
    <lineage>
        <taxon>Eukaryota</taxon>
        <taxon>Fungi</taxon>
        <taxon>Dikarya</taxon>
        <taxon>Ascomycota</taxon>
        <taxon>Taphrinomycotina</taxon>
        <taxon>Schizosaccharomycetes</taxon>
        <taxon>Schizosaccharomycetales</taxon>
        <taxon>Schizosaccharomycetaceae</taxon>
        <taxon>Schizosaccharomyces</taxon>
    </lineage>
</organism>
<reference key="1">
    <citation type="journal article" date="2002" name="Nature">
        <title>The genome sequence of Schizosaccharomyces pombe.</title>
        <authorList>
            <person name="Wood V."/>
            <person name="Gwilliam R."/>
            <person name="Rajandream M.A."/>
            <person name="Lyne M.H."/>
            <person name="Lyne R."/>
            <person name="Stewart A."/>
            <person name="Sgouros J.G."/>
            <person name="Peat N."/>
            <person name="Hayles J."/>
            <person name="Baker S.G."/>
            <person name="Basham D."/>
            <person name="Bowman S."/>
            <person name="Brooks K."/>
            <person name="Brown D."/>
            <person name="Brown S."/>
            <person name="Chillingworth T."/>
            <person name="Churcher C.M."/>
            <person name="Collins M."/>
            <person name="Connor R."/>
            <person name="Cronin A."/>
            <person name="Davis P."/>
            <person name="Feltwell T."/>
            <person name="Fraser A."/>
            <person name="Gentles S."/>
            <person name="Goble A."/>
            <person name="Hamlin N."/>
            <person name="Harris D.E."/>
            <person name="Hidalgo J."/>
            <person name="Hodgson G."/>
            <person name="Holroyd S."/>
            <person name="Hornsby T."/>
            <person name="Howarth S."/>
            <person name="Huckle E.J."/>
            <person name="Hunt S."/>
            <person name="Jagels K."/>
            <person name="James K.D."/>
            <person name="Jones L."/>
            <person name="Jones M."/>
            <person name="Leather S."/>
            <person name="McDonald S."/>
            <person name="McLean J."/>
            <person name="Mooney P."/>
            <person name="Moule S."/>
            <person name="Mungall K.L."/>
            <person name="Murphy L.D."/>
            <person name="Niblett D."/>
            <person name="Odell C."/>
            <person name="Oliver K."/>
            <person name="O'Neil S."/>
            <person name="Pearson D."/>
            <person name="Quail M.A."/>
            <person name="Rabbinowitsch E."/>
            <person name="Rutherford K.M."/>
            <person name="Rutter S."/>
            <person name="Saunders D."/>
            <person name="Seeger K."/>
            <person name="Sharp S."/>
            <person name="Skelton J."/>
            <person name="Simmonds M.N."/>
            <person name="Squares R."/>
            <person name="Squares S."/>
            <person name="Stevens K."/>
            <person name="Taylor K."/>
            <person name="Taylor R.G."/>
            <person name="Tivey A."/>
            <person name="Walsh S.V."/>
            <person name="Warren T."/>
            <person name="Whitehead S."/>
            <person name="Woodward J.R."/>
            <person name="Volckaert G."/>
            <person name="Aert R."/>
            <person name="Robben J."/>
            <person name="Grymonprez B."/>
            <person name="Weltjens I."/>
            <person name="Vanstreels E."/>
            <person name="Rieger M."/>
            <person name="Schaefer M."/>
            <person name="Mueller-Auer S."/>
            <person name="Gabel C."/>
            <person name="Fuchs M."/>
            <person name="Duesterhoeft A."/>
            <person name="Fritzc C."/>
            <person name="Holzer E."/>
            <person name="Moestl D."/>
            <person name="Hilbert H."/>
            <person name="Borzym K."/>
            <person name="Langer I."/>
            <person name="Beck A."/>
            <person name="Lehrach H."/>
            <person name="Reinhardt R."/>
            <person name="Pohl T.M."/>
            <person name="Eger P."/>
            <person name="Zimmermann W."/>
            <person name="Wedler H."/>
            <person name="Wambutt R."/>
            <person name="Purnelle B."/>
            <person name="Goffeau A."/>
            <person name="Cadieu E."/>
            <person name="Dreano S."/>
            <person name="Gloux S."/>
            <person name="Lelaure V."/>
            <person name="Mottier S."/>
            <person name="Galibert F."/>
            <person name="Aves S.J."/>
            <person name="Xiang Z."/>
            <person name="Hunt C."/>
            <person name="Moore K."/>
            <person name="Hurst S.M."/>
            <person name="Lucas M."/>
            <person name="Rochet M."/>
            <person name="Gaillardin C."/>
            <person name="Tallada V.A."/>
            <person name="Garzon A."/>
            <person name="Thode G."/>
            <person name="Daga R.R."/>
            <person name="Cruzado L."/>
            <person name="Jimenez J."/>
            <person name="Sanchez M."/>
            <person name="del Rey F."/>
            <person name="Benito J."/>
            <person name="Dominguez A."/>
            <person name="Revuelta J.L."/>
            <person name="Moreno S."/>
            <person name="Armstrong J."/>
            <person name="Forsburg S.L."/>
            <person name="Cerutti L."/>
            <person name="Lowe T."/>
            <person name="McCombie W.R."/>
            <person name="Paulsen I."/>
            <person name="Potashkin J."/>
            <person name="Shpakovski G.V."/>
            <person name="Ussery D."/>
            <person name="Barrell B.G."/>
            <person name="Nurse P."/>
        </authorList>
    </citation>
    <scope>NUCLEOTIDE SEQUENCE [LARGE SCALE GENOMIC DNA]</scope>
    <source>
        <strain>972 / ATCC 24843</strain>
    </source>
</reference>
<reference key="2">
    <citation type="journal article" date="2006" name="Nat. Biotechnol.">
        <title>ORFeome cloning and global analysis of protein localization in the fission yeast Schizosaccharomyces pombe.</title>
        <authorList>
            <person name="Matsuyama A."/>
            <person name="Arai R."/>
            <person name="Yashiroda Y."/>
            <person name="Shirai A."/>
            <person name="Kamata A."/>
            <person name="Sekido S."/>
            <person name="Kobayashi Y."/>
            <person name="Hashimoto A."/>
            <person name="Hamamoto M."/>
            <person name="Hiraoka Y."/>
            <person name="Horinouchi S."/>
            <person name="Yoshida M."/>
        </authorList>
    </citation>
    <scope>SUBCELLULAR LOCATION [LARGE SCALE ANALYSIS]</scope>
</reference>
<accession>O14358</accession>
<proteinExistence type="inferred from homology"/>
<name>RT27_SCHPO</name>